<proteinExistence type="evidence at transcript level"/>
<reference key="1">
    <citation type="journal article" date="2005" name="BMC Genomics">
        <title>Bacterial genome adaptation to niches: divergence of the potential virulence genes in three Burkholderia species of different survival strategies.</title>
        <authorList>
            <person name="Kim H.S."/>
            <person name="Schell M.A."/>
            <person name="Yu Y."/>
            <person name="Ulrich R.L."/>
            <person name="Sarria S.H."/>
            <person name="Nierman W.C."/>
            <person name="DeShazer D."/>
        </authorList>
    </citation>
    <scope>NUCLEOTIDE SEQUENCE [LARGE SCALE GENOMIC DNA]</scope>
    <source>
        <strain>ATCC 700388 / DSM 13276 / CCUG 48851 / CIP 106301 / E264</strain>
    </source>
</reference>
<reference key="2">
    <citation type="journal article" date="2010" name="J. Am. Chem. Soc.">
        <title>Induced biosynthesis of cryptic polyketide metabolites in a Burkholderia thailandensis quorum sensing mutant.</title>
        <authorList>
            <person name="Ishida K."/>
            <person name="Lincke T."/>
            <person name="Behnken S."/>
            <person name="Hertweck C."/>
        </authorList>
    </citation>
    <scope>INDUCTION</scope>
    <source>
        <strain>ATCC 700388 / DSM 13276 / CCUG 48851 / CIP 106301 / E264</strain>
    </source>
</reference>
<comment type="function">
    <text evidence="8">Involved in production of the polyketide antibiotic thailandamide.</text>
</comment>
<comment type="cofactor">
    <cofactor evidence="1">
        <name>pantetheine 4'-phosphate</name>
        <dbReference type="ChEBI" id="CHEBI:47942"/>
    </cofactor>
    <text evidence="1">Binds 4 phosphopantetheines covalently.</text>
</comment>
<comment type="pathway">
    <text evidence="8">Antibiotic biosynthesis.</text>
</comment>
<comment type="subcellular location">
    <subcellularLocation>
        <location evidence="7">Cytoplasm</location>
    </subcellularLocation>
</comment>
<comment type="induction">
    <text evidence="5">Expressed at basal levels.</text>
</comment>
<comment type="miscellaneous">
    <text evidence="7">Thailandamide is a polyketide that is toxic to human cell lines but also has antibacterial activity on E.coli, S.typhimurium and S.aureus. It probably acts on acetyl-CoA carboxylase in the fatty acid synthesis pathway, which is rarely found to be an antibiotic target. These data suggest it might be a good starting point for engineering of novel antibiotics.</text>
</comment>
<feature type="chain" id="PRO_0000452505" description="Polyketide synthase ThaG">
    <location>
        <begin position="1"/>
        <end position="5628"/>
    </location>
</feature>
<feature type="domain" description="Ketosynthase family 3 (KS3) 1" evidence="2">
    <location>
        <begin position="13"/>
        <end position="448"/>
    </location>
</feature>
<feature type="domain" description="Carrier 1" evidence="1">
    <location>
        <begin position="1209"/>
        <end position="1286"/>
    </location>
</feature>
<feature type="domain" description="Ketosynthase family 3 (KS3) 2" evidence="2">
    <location>
        <begin position="1373"/>
        <end position="1781"/>
    </location>
</feature>
<feature type="domain" description="PKS/mFAS DH 1" evidence="3">
    <location>
        <begin position="1967"/>
        <end position="2261"/>
    </location>
</feature>
<feature type="domain" description="Carrier 2" evidence="1">
    <location>
        <begin position="2702"/>
        <end position="2780"/>
    </location>
</feature>
<feature type="domain" description="Carrier 3" evidence="1">
    <location>
        <begin position="2862"/>
        <end position="2935"/>
    </location>
</feature>
<feature type="domain" description="Ketosynthase family 3 (KS3) 3" evidence="2">
    <location>
        <begin position="3005"/>
        <end position="3430"/>
    </location>
</feature>
<feature type="domain" description="PKS/mFAS DH 2" evidence="3">
    <location>
        <begin position="3621"/>
        <end position="3895"/>
    </location>
</feature>
<feature type="domain" description="Carrier 4" evidence="1">
    <location>
        <begin position="4840"/>
        <end position="4914"/>
    </location>
</feature>
<feature type="domain" description="Ketosynthase family 3 (KS3) 4" evidence="2">
    <location>
        <begin position="4998"/>
        <end position="5424"/>
    </location>
</feature>
<feature type="domain" description="Carrier 5" evidence="1">
    <location>
        <begin position="5470"/>
        <end position="5544"/>
    </location>
</feature>
<feature type="region of interest" description="Disordered" evidence="4">
    <location>
        <begin position="552"/>
        <end position="613"/>
    </location>
</feature>
<feature type="region of interest" description="Disordered" evidence="4">
    <location>
        <begin position="1156"/>
        <end position="1183"/>
    </location>
</feature>
<feature type="region of interest" description="N-terminal hotdog fold 1" evidence="3">
    <location>
        <begin position="1967"/>
        <end position="2099"/>
    </location>
</feature>
<feature type="region of interest" description="C-terminal hotdog fold 1" evidence="3">
    <location>
        <begin position="2113"/>
        <end position="2261"/>
    </location>
</feature>
<feature type="region of interest" description="Disordered" evidence="4">
    <location>
        <begin position="2426"/>
        <end position="2446"/>
    </location>
</feature>
<feature type="region of interest" description="Disordered" evidence="4">
    <location>
        <begin position="2817"/>
        <end position="2836"/>
    </location>
</feature>
<feature type="region of interest" description="Disordered" evidence="4">
    <location>
        <begin position="3526"/>
        <end position="3546"/>
    </location>
</feature>
<feature type="region of interest" description="N-terminal hotdog fold 2" evidence="3">
    <location>
        <begin position="3621"/>
        <end position="3743"/>
    </location>
</feature>
<feature type="region of interest" description="C-terminal hotdog fold 2" evidence="3">
    <location>
        <begin position="3758"/>
        <end position="3895"/>
    </location>
</feature>
<feature type="region of interest" description="Disordered" evidence="4">
    <location>
        <begin position="3917"/>
        <end position="3942"/>
    </location>
</feature>
<feature type="region of interest" description="Disordered" evidence="4">
    <location>
        <begin position="4960"/>
        <end position="4992"/>
    </location>
</feature>
<feature type="region of interest" description="Disordered" evidence="4">
    <location>
        <begin position="5573"/>
        <end position="5603"/>
    </location>
</feature>
<feature type="compositionally biased region" description="Basic and acidic residues" evidence="4">
    <location>
        <begin position="559"/>
        <end position="589"/>
    </location>
</feature>
<feature type="compositionally biased region" description="Low complexity" evidence="4">
    <location>
        <begin position="1156"/>
        <end position="1173"/>
    </location>
</feature>
<feature type="compositionally biased region" description="Basic and acidic residues" evidence="4">
    <location>
        <begin position="1174"/>
        <end position="1183"/>
    </location>
</feature>
<feature type="compositionally biased region" description="Low complexity" evidence="4">
    <location>
        <begin position="2822"/>
        <end position="2835"/>
    </location>
</feature>
<feature type="active site" description="For beta-ketoacyl synthase 1 activity" evidence="2">
    <location>
        <position position="184"/>
    </location>
</feature>
<feature type="active site" description="For beta-ketoacyl synthase 1 activity" evidence="2">
    <location>
        <position position="319"/>
    </location>
</feature>
<feature type="active site" description="For beta-ketoacyl synthase 1 activity" evidence="2">
    <location>
        <position position="361"/>
    </location>
</feature>
<feature type="active site" description="For beta-ketoacyl synthase 2 activity" evidence="2">
    <location>
        <position position="1529"/>
    </location>
</feature>
<feature type="active site" description="For beta-ketoacyl synthase 2 activity" evidence="2">
    <location>
        <position position="1664"/>
    </location>
</feature>
<feature type="active site" description="For beta-ketoacyl synthase 2 activity" evidence="2">
    <location>
        <position position="1704"/>
    </location>
</feature>
<feature type="active site" description="Proton acceptor; for dehydratase activity 1" evidence="3">
    <location>
        <position position="1999"/>
    </location>
</feature>
<feature type="active site" description="Proton donor; for dehydratase activity 1" evidence="3">
    <location>
        <position position="2175"/>
    </location>
</feature>
<feature type="active site" description="For beta-ketoacyl synthase 3 activity" evidence="2">
    <location>
        <position position="3175"/>
    </location>
</feature>
<feature type="active site" description="For beta-ketoacyl synthase 3 activity" evidence="2">
    <location>
        <position position="3310"/>
    </location>
</feature>
<feature type="active site" description="For beta-ketoacyl synthase 3 activity" evidence="2">
    <location>
        <position position="3351"/>
    </location>
</feature>
<feature type="active site" description="Proton acceptor; for dehydratase activity 2" evidence="3">
    <location>
        <position position="3650"/>
    </location>
</feature>
<feature type="active site" description="Proton donor; for dehydratase activity 2" evidence="3">
    <location>
        <position position="3818"/>
    </location>
</feature>
<feature type="active site" description="For beta-ketoacyl synthase 4 activity" evidence="2">
    <location>
        <position position="5158"/>
    </location>
</feature>
<feature type="active site" description="For beta-ketoacyl synthase 4 activity" evidence="2">
    <location>
        <position position="5293"/>
    </location>
</feature>
<feature type="active site" description="For beta-ketoacyl synthase 4 activity" evidence="2">
    <location>
        <position position="5339"/>
    </location>
</feature>
<feature type="modified residue" description="O-(pantetheine 4'-phosphoryl)serine" evidence="1">
    <location>
        <position position="1246"/>
    </location>
</feature>
<feature type="modified residue" description="O-(pantetheine 4'-phosphoryl)serine" evidence="1">
    <location>
        <position position="2896"/>
    </location>
</feature>
<feature type="modified residue" description="O-(pantetheine 4'-phosphoryl)serine" evidence="1">
    <location>
        <position position="4874"/>
    </location>
</feature>
<feature type="modified residue" description="O-(pantetheine 4'-phosphoryl)serine" evidence="1">
    <location>
        <position position="5504"/>
    </location>
</feature>
<name>THAG_BURTA</name>
<evidence type="ECO:0000255" key="1">
    <source>
        <dbReference type="PROSITE-ProRule" id="PRU00258"/>
    </source>
</evidence>
<evidence type="ECO:0000255" key="2">
    <source>
        <dbReference type="PROSITE-ProRule" id="PRU01348"/>
    </source>
</evidence>
<evidence type="ECO:0000255" key="3">
    <source>
        <dbReference type="PROSITE-ProRule" id="PRU01363"/>
    </source>
</evidence>
<evidence type="ECO:0000256" key="4">
    <source>
        <dbReference type="SAM" id="MobiDB-lite"/>
    </source>
</evidence>
<evidence type="ECO:0000269" key="5">
    <source>
    </source>
</evidence>
<evidence type="ECO:0000303" key="6">
    <source>
    </source>
</evidence>
<evidence type="ECO:0000305" key="7"/>
<evidence type="ECO:0000305" key="8">
    <source>
    </source>
</evidence>
<sequence length="5628" mass="587364">MGIEQLNTTRAQHDDIAVIGIACRFPGASDYRQFWDNLCERRVSIGEIPGERWDWRAYWGDPQQDANACNSRWGGFVDEVGAFDLGFFGMSAREVDKMDPQQRLALELAWHCFEDAGLRPSAVAKRDVGVFVGIANLDYKEIVEAHASEIDAYYASGVAASVASNRLSYWFDLRGPSVTVDTACSGSLYALHLAREALRRGECEMALAGGVSLLLTPRRYLGFARARMLSPTGAIRAFDDAADGMVRGEGGGLVLLKPLSRALDDGDRIFGVLAGSAVNHSGRTYSLTYPDADAQARVIRAAFDAAGVSPAQVSYVEAHGTGTPKGDPIELEGLLRVFGAQPRDALAPRCAIGSVKANIGHLESAAGIAGVIKTLLALHHGMLPPMPHFAALNHRVDAARFAAAGLAVADALAPWEAGASADGASAARIAGVSAFGFAGTNAHVVLREAPAAARAAVAAGRADGAGVLCLSAKTDAALERVRAGFVEWLARDGARHAFADICAALVSRREHFASRIAVAACDVDGALAALRARADTASSVYRAGRVALDDDGNLVDASGPHDEQADHDGSGEHGEHGERARAGADDLSRARRRASRYVRGASPDAWGPSDGPTPHVPLPDYPFERTVCWTGPRPSRAVAGPARGPAVDEAVDEAVDEAGAADGDVFVLEPRWHLAPAADARPAPARPEDAAVVVCVVADAAQRAAVERALARIATAPACMFVEPDATMGEPARAVDALVRTLDGIADRARADVSGVDTSGAAAPISVWYCADLARDARAPIDVRAYDRLLTLLQALAKTRAPLRRVLLAGVSESLAADAWPALVTVLAPRRPALAVTPVLFDHGTPEALWVSALLQEARAAGGAAVRYAAGERSVAVLARAANAASENAARLAGGAPLRTGGCYLLTGGLGGLGRLFAVRLMRRYGARVVALGRSAHDAGVQASVAALCAEAGAGTLRYLQADVCDAAAMAAVLDDIGRHEGRLNGVIHAAGCEDRASLADKSLDDVHAVLAPKLAAATVLDRLTAGLPLDFVCLFSSLAGIVGDFGCGAYALGNRLLMSYAQRADGRVDAHGRRRRVVAIAWPLWRDGAMGFDDPVKRDRYLAASGQRMLDADEGFAWFERLLASPSAAPVVLAGERARIVSWLGSIDGAPVADASPGAASSGAAAPNAASDASRDTERAEATDAAAPIVAAGAPAHAHASAPRERDAHGSARLPALRGIAARVLGADAALLDEQASFADLGFDSIGLMDFARAVGEAFGIDMSPAMLFSHVTLKRLAGHLATRLDDAPRAVAGARSGAAHASAGRACAAAGRADGARASRIDVRPPEAGAGERAADARPPLTAPEIAPEIAPESASGFASAPHPAPIPPAYEPIAIVGMSGRFPDARDIDAFWSLLMSGRGAARRVDPHDRFAAPRDEAAAWLAPVPGIDEFDPLFFDIAPAEAQRMDPRERLLLQHAWLALEDAGIGARALADHALGMFVGAEAGEYGGLSREPRSIVSDHNGVLAARLSYFLDLTGPNLSVNTACSSGLVALHLAIRSLHARECGIALAAGVNLMLSAELHDKMARAGMLSQHGVCRALDRDADGFVPGEAVVVVALKRLADALADGDAIHGVIRASGVNYDGRTNGMTAPSGLAQARLLTDAWRTAGIDPAELGYVVAHGTGTRLGDPVELNALGDALRASTGRRHFCAVTSNKPNVGHTLAASGLVSLVNLVEALRRAVIPPSAHWREGNEFVAWGDSPLRVNTVASAWPDGARRLGGASAFGMSGTNAHVIVEAAEPARARAPHAPRGGVLFVVSAKTGDALAQRLRDLADCLASDAWSDGDLADVAHTLLHGRQHFEHRSAVFARGKADAIDALRAAADAVRNAPARRTGALRLLDDYAAHLSARYAAWRDAPARDVDEARRLLEAIGDAYREGATPSALVVAPAPGRTVRLPGYPFACERHWHPAPARAGGASAGANAREPGARERAEAAAAPHVVVLTLTGSEPYLRDHLIDGQRVLPGAAHLDMARAAFERVRAAGGRAARFVALRDVVWRAPLVAGDAGAEVHVELTPSGTAFAYRILSRPADRAAAVGAALTLHSEGVVDELNEPAPEPLDLDGWRAACAGERVDGAALHARFASLGIGYGPSHRGVAHVRLGEHAALARLDLGALADADFDGFGLHPGIVDSAFQASAALSAPREDAAVPFMLRALHVYSRAARTMWAAIRVAAPAGGGAGGVDTRPIDIDLVHDDGAICASLRGWVSARWRKLAGAPPAARATAALRGWRWRAAEPDPRAAEAATRVVLLAPDFGALAAELAAHDAVRCEMLDDVSSHALPDAFAARATQAFAAVRRELAAKPGRPVLFQAVCREADSATAWGLAGLFKTAADENPLASGHVVLVSESFDRARLAAALLAERAWTGHLRYGGAGREAFAIDADEDDRDGREPAGGPPLRDDGVYAISGGAGGIGRAIARDIVARTRAARVYLLGRSAHAPSDLFATADERARIRYCRVDVADREQVHAWIAGLKRDGEALRGVVHAAGVVDDAFVVAKEPSRVHAVLRPKVAGAVWLDEATRDAPLDFFVAFSSLASAFGNAGQADYAMANAFVDGYMTERRARVAGGVSRGASLSIQWPLWADAGMRMPAAIASRLAAATGLAPLPSAEGIAAWRAALARDDANVAVLYGERAAIAAWLATSDAMPPRARAARPMPAARVDLHALRALAASLIGVDAHDINVDADIDEYGLDAVALAHLAREIGERAGRADVGLGFVRGERTLRAIARALDASAPGGDAEVDIGADADADADNAPDAEACVECAGIDARATPPDAGAPQRGAHAAAAEGSARDEAARSIAPLAGAGSPDGASALRARVGARLSALLADVLKVPVARLEPDAPFERYGIDSLTVVALNESLGRHVDALPKTLFFEYRTLAELTDYFVRRHAGAAWFAPDARAEHGAAGALATLGAATRATQTEQAEQSRVAPLAPPRRVFAAATAATRSRAASAPPAATADAIAVIGLAGRYPQARDLDAFWRNLRDGRDCITEIPAERWNHGDFFDPQKGVAGKTYSKWGGFIEGVDEFDAAFFNIAPRDAERMDPQERLFLQASYQAIEDAGYARASLGAGRVGVFAGVMYSEYQLYGIEESAAGRPAALSGSAASIANRVSYHLDLHGPSMAVDTMCSSSLTALHLACRSLQRGECELALAGGVNVSVHPNKYLMLADNRFVSSAGRCESFGAGGDGYVPAEGVGVAVLKPLRAAIADGDAIHGVICATALNHGGKNNGYTVPNPAWQAAVIEAALGEAGVAPGDVSYVEAHGTGTTLGDPIEIAGLARAFGEPGARRGAPCAIGSVKSNIGHAESAAGIAGLTKVLLQMRHRMLVPSLHADTLNPNIAFETTPFCVQRALERWERPGDGERVAGVSSFGAGGANAHVIVREYRSDDERDGRDEPASTAPARARPAWIVLSARNEDGLRARAAQLRELAAGCEGDADLHAIAYTLQTGRDAMDERLAFEATSIADLIASLDAFARGEPGKKQLRGNGRARRGDAPPAGVADARLARGEHRAALDDWVRGASIDWRRAYGPGAPFGPAPRRMHLPVYPFARTRHWLPAPLDARRRAARAGGGLHPMLDANRSEFGRQRFVVEFDGREPWLADHRVDGRRVLPGVAYLEMARAALAASAPDMHADGGATLEDVRWLRPCIVPDGGATLEIALERDGDGIAFSISQTSAHAQPALCCTGRSPSRAARGGGERIDVDAMRDAFRAAPAFDADACYRAFARRGVQYGPSHRTIERVWADGDRALARLRSARPADPRLVMWPGLLDGALQSLIGLHGLDGDLLAAPYRLARLDVHGACGPAMWALARRAGDGALDLVLCDDAGEACVTMRGFASRAAASWRTAAQAAGAPHEAVAGGDARAAFGPAAESPSAATSTSAATSPAISTSAATPAAADGDDWLLLPRWLACDLDPERDAGARAVAPRSVLAIADDACVHDLSAAAFGGASVRRMPASDAADAARLAAILGDAPRLDALVFVAPGAHARSAQALIDAQESGAIALFRIVKALLAHGYRDDALTLAIVTEQAVALYPGEPIDPAHAALHGMAGVLGRDLPRWRVLCADVERARAYAGAALVAQAGPAGEGPRINRLGRWHRRALARVDAPAARESAFRRGGVYVIVGGAGGLGRVLTEHLIRRADARVVWVGRRAADGRIAADCASFESIGAPPLYLQADASDAGAMGAVRDAVKARYGAIHGVVHSALALRDATLATMTEADFRRVLAAKLDTSVRLAEAFADEPLDFMLFFSSFAAFSFPQGQANYAAGCAFQDAFAQHLAARAPFAVKTVNWGFWGHAGVVATPAHRDRMARLGIGSIEPDAAMRSLECLLACDVGQLALINVRRDDAIAPLMTPRRVALHAPGAGPRALDSVARVRPDAERTAAARLHGGLQRDEWRDVLLSLLDATFDALGARRAAEAGGDALRAALGIAPRHARWFAASLDWLRALREGAHAAAAMSADDAWRAWARLGAACDGDAGRSAQYALVDATLRHLADIVTGRRKATEIMFPKGSMALVENVYRHHPVADYFNLAVAEIVAARAADVVRERGVRILEVGAGTGGTTARVLAVLRERGVRVDDYRFTDVSPGFLDHAAARFGAGAPFMSYGLFDVMRAPAAQGIAPHGFDIVVATNVLHATADVRASLRHCRDALRAGGLLVVNEISDKSLFTHLTFGLLDGWWAYEDAALRIDGSPALDAHHWAFALRSEGYADVAFPWADAHDLGQQIVLADAGDVVDAADAQAMRAREAEPWAWATGAESESVLEAVSETETALTPAPTQSPAAPSDATRTAALLRSLLGEALKVEPVSIEGDGAFGDYGLDSIIGMGFVDAINRALDLSLDVTAVFEHNTVDALAAYVGSQLAARAPAAAGARDVEPASSLASSSASDFVSARLPAVDAAASSAFDAAPRARTGADAPDTSLASSASSISSARASSPASPARDAASFDVAIVGASCRFPGADGLDALWRCIVDERSCVRDVGAKWLRTRDPADAGADYRAAVLDGIDRFDAARFGISPREARRMDPQQRLLLTEAWRALQDAGDAARAAAHRTGVFVAAGANEYGAGLDAADNPFSMTSMAPALMPNRISYALDLRGPSEMTDTACSSSLVALHRAVRSLRDGECDQAVVAAVNLLLSAEKFEGFAELGFLSPSGRTRSFDAAGDGFVRGEGAAALVLKPLAAARRDGDFVYACIKGTAVHHGGRGAALTAPNAAGIREAMSAAYRNAGIDARTVSYLEAHGVGSPVGDAIELNAIRDAYAALSGEPAPAAPAASCRIGSVKPVFGHVELASGLLAVCKVLMALRHGVLPGVPGFERPNPHANLAGSPLVVARAAAPWPAPRDDANGAAVPRRASVNSFGFGGVNAHVVLEEDVSSRHAPRVFAQPPLDGARHWECPREIAGAPAARPGRPAPDAPHARIEAVIRDALAQALGVAPDAFELAVPLGEYGADSMLDLHLATRIEETLGVQLSVRELFAHRTLGALRDHVAERIARDGGRRAAEAARAPDAAMASDVAEASVVSEATEASDASEASDASEASEASEASEASKAPADLAALLERFRAGQMDLDDIVDLV</sequence>
<keyword id="KW-0045">Antibiotic biosynthesis</keyword>
<keyword id="KW-0963">Cytoplasm</keyword>
<keyword id="KW-0511">Multifunctional enzyme</keyword>
<keyword id="KW-0596">Phosphopantetheine</keyword>
<keyword id="KW-0597">Phosphoprotein</keyword>
<keyword id="KW-0677">Repeat</keyword>
<keyword id="KW-0808">Transferase</keyword>
<gene>
    <name evidence="6" type="primary">thaG</name>
    <name type="ordered locus">BTH_II1674</name>
</gene>
<organism>
    <name type="scientific">Burkholderia thailandensis (strain ATCC 700388 / DSM 13276 / CCUG 48851 / CIP 106301 / E264)</name>
    <dbReference type="NCBI Taxonomy" id="271848"/>
    <lineage>
        <taxon>Bacteria</taxon>
        <taxon>Pseudomonadati</taxon>
        <taxon>Pseudomonadota</taxon>
        <taxon>Betaproteobacteria</taxon>
        <taxon>Burkholderiales</taxon>
        <taxon>Burkholderiaceae</taxon>
        <taxon>Burkholderia</taxon>
        <taxon>pseudomallei group</taxon>
    </lineage>
</organism>
<accession>Q2T4N1</accession>
<protein>
    <recommendedName>
        <fullName evidence="7">Polyketide synthase ThaG</fullName>
    </recommendedName>
</protein>
<dbReference type="EMBL" id="CP000085">
    <property type="protein sequence ID" value="ABC34832.1"/>
    <property type="molecule type" value="Genomic_DNA"/>
</dbReference>
<dbReference type="SMR" id="Q2T4N1"/>
<dbReference type="KEGG" id="bte:BTH_II1674"/>
<dbReference type="HOGENOM" id="CLU_223515_0_0_4"/>
<dbReference type="Proteomes" id="UP000001930">
    <property type="component" value="Chromosome II"/>
</dbReference>
<dbReference type="GO" id="GO:0005737">
    <property type="term" value="C:cytoplasm"/>
    <property type="evidence" value="ECO:0007669"/>
    <property type="project" value="UniProtKB-SubCell"/>
</dbReference>
<dbReference type="GO" id="GO:0004315">
    <property type="term" value="F:3-oxoacyl-[acyl-carrier-protein] synthase activity"/>
    <property type="evidence" value="ECO:0007669"/>
    <property type="project" value="InterPro"/>
</dbReference>
<dbReference type="GO" id="GO:0004312">
    <property type="term" value="F:fatty acid synthase activity"/>
    <property type="evidence" value="ECO:0007669"/>
    <property type="project" value="TreeGrafter"/>
</dbReference>
<dbReference type="GO" id="GO:0031177">
    <property type="term" value="F:phosphopantetheine binding"/>
    <property type="evidence" value="ECO:0007669"/>
    <property type="project" value="InterPro"/>
</dbReference>
<dbReference type="GO" id="GO:0017000">
    <property type="term" value="P:antibiotic biosynthetic process"/>
    <property type="evidence" value="ECO:0007669"/>
    <property type="project" value="UniProtKB-KW"/>
</dbReference>
<dbReference type="GO" id="GO:0006633">
    <property type="term" value="P:fatty acid biosynthetic process"/>
    <property type="evidence" value="ECO:0007669"/>
    <property type="project" value="InterPro"/>
</dbReference>
<dbReference type="CDD" id="cd02440">
    <property type="entry name" value="AdoMet_MTases"/>
    <property type="match status" value="1"/>
</dbReference>
<dbReference type="CDD" id="cd08953">
    <property type="entry name" value="KR_2_SDR_x"/>
    <property type="match status" value="1"/>
</dbReference>
<dbReference type="CDD" id="cd00833">
    <property type="entry name" value="PKS"/>
    <property type="match status" value="4"/>
</dbReference>
<dbReference type="FunFam" id="3.40.47.10:FF:000019">
    <property type="entry name" value="Polyketide synthase type I"/>
    <property type="match status" value="2"/>
</dbReference>
<dbReference type="Gene3D" id="1.10.1240.100">
    <property type="match status" value="3"/>
</dbReference>
<dbReference type="Gene3D" id="3.40.47.10">
    <property type="match status" value="4"/>
</dbReference>
<dbReference type="Gene3D" id="1.10.1200.10">
    <property type="entry name" value="ACP-like"/>
    <property type="match status" value="4"/>
</dbReference>
<dbReference type="Gene3D" id="3.40.50.720">
    <property type="entry name" value="NAD(P)-binding Rossmann-like Domain"/>
    <property type="match status" value="3"/>
</dbReference>
<dbReference type="Gene3D" id="3.10.129.110">
    <property type="entry name" value="Polyketide synthase dehydratase"/>
    <property type="match status" value="2"/>
</dbReference>
<dbReference type="Gene3D" id="3.40.50.150">
    <property type="entry name" value="Vaccinia Virus protein VP39"/>
    <property type="match status" value="1"/>
</dbReference>
<dbReference type="InterPro" id="IPR036736">
    <property type="entry name" value="ACP-like_sf"/>
</dbReference>
<dbReference type="InterPro" id="IPR018201">
    <property type="entry name" value="Ketoacyl_synth_AS"/>
</dbReference>
<dbReference type="InterPro" id="IPR014031">
    <property type="entry name" value="Ketoacyl_synth_C"/>
</dbReference>
<dbReference type="InterPro" id="IPR014030">
    <property type="entry name" value="Ketoacyl_synth_N"/>
</dbReference>
<dbReference type="InterPro" id="IPR013217">
    <property type="entry name" value="Methyltransf_12"/>
</dbReference>
<dbReference type="InterPro" id="IPR036291">
    <property type="entry name" value="NAD(P)-bd_dom_sf"/>
</dbReference>
<dbReference type="InterPro" id="IPR032821">
    <property type="entry name" value="PKS_assoc"/>
</dbReference>
<dbReference type="InterPro" id="IPR020841">
    <property type="entry name" value="PKS_Beta-ketoAc_synthase_dom"/>
</dbReference>
<dbReference type="InterPro" id="IPR042104">
    <property type="entry name" value="PKS_dehydratase_sf"/>
</dbReference>
<dbReference type="InterPro" id="IPR020807">
    <property type="entry name" value="PKS_DH"/>
</dbReference>
<dbReference type="InterPro" id="IPR049551">
    <property type="entry name" value="PKS_DH_C"/>
</dbReference>
<dbReference type="InterPro" id="IPR049552">
    <property type="entry name" value="PKS_DH_N"/>
</dbReference>
<dbReference type="InterPro" id="IPR013968">
    <property type="entry name" value="PKS_KR"/>
</dbReference>
<dbReference type="InterPro" id="IPR049900">
    <property type="entry name" value="PKS_mFAS_DH"/>
</dbReference>
<dbReference type="InterPro" id="IPR050091">
    <property type="entry name" value="PKS_NRPS_Biosynth_Enz"/>
</dbReference>
<dbReference type="InterPro" id="IPR020806">
    <property type="entry name" value="PKS_PP-bd"/>
</dbReference>
<dbReference type="InterPro" id="IPR009081">
    <property type="entry name" value="PP-bd_ACP"/>
</dbReference>
<dbReference type="InterPro" id="IPR054514">
    <property type="entry name" value="RhiE-like_linker"/>
</dbReference>
<dbReference type="InterPro" id="IPR029063">
    <property type="entry name" value="SAM-dependent_MTases_sf"/>
</dbReference>
<dbReference type="InterPro" id="IPR016039">
    <property type="entry name" value="Thiolase-like"/>
</dbReference>
<dbReference type="PANTHER" id="PTHR43775">
    <property type="entry name" value="FATTY ACID SYNTHASE"/>
    <property type="match status" value="1"/>
</dbReference>
<dbReference type="PANTHER" id="PTHR43775:SF37">
    <property type="entry name" value="SI:DKEY-61P9.11"/>
    <property type="match status" value="1"/>
</dbReference>
<dbReference type="Pfam" id="PF22621">
    <property type="entry name" value="CurL-like_PKS_C"/>
    <property type="match status" value="1"/>
</dbReference>
<dbReference type="Pfam" id="PF16197">
    <property type="entry name" value="KAsynt_C_assoc"/>
    <property type="match status" value="1"/>
</dbReference>
<dbReference type="Pfam" id="PF00109">
    <property type="entry name" value="ketoacyl-synt"/>
    <property type="match status" value="4"/>
</dbReference>
<dbReference type="Pfam" id="PF02801">
    <property type="entry name" value="Ketoacyl-synt_C"/>
    <property type="match status" value="4"/>
</dbReference>
<dbReference type="Pfam" id="PF08659">
    <property type="entry name" value="KR"/>
    <property type="match status" value="3"/>
</dbReference>
<dbReference type="Pfam" id="PF08242">
    <property type="entry name" value="Methyltransf_12"/>
    <property type="match status" value="1"/>
</dbReference>
<dbReference type="Pfam" id="PF21089">
    <property type="entry name" value="PKS_DH_N"/>
    <property type="match status" value="2"/>
</dbReference>
<dbReference type="Pfam" id="PF00550">
    <property type="entry name" value="PP-binding"/>
    <property type="match status" value="5"/>
</dbReference>
<dbReference type="Pfam" id="PF14765">
    <property type="entry name" value="PS-DH"/>
    <property type="match status" value="2"/>
</dbReference>
<dbReference type="Pfam" id="PF22336">
    <property type="entry name" value="RhiE-like_linker"/>
    <property type="match status" value="1"/>
</dbReference>
<dbReference type="SMART" id="SM00826">
    <property type="entry name" value="PKS_DH"/>
    <property type="match status" value="2"/>
</dbReference>
<dbReference type="SMART" id="SM00822">
    <property type="entry name" value="PKS_KR"/>
    <property type="match status" value="3"/>
</dbReference>
<dbReference type="SMART" id="SM00825">
    <property type="entry name" value="PKS_KS"/>
    <property type="match status" value="4"/>
</dbReference>
<dbReference type="SMART" id="SM00823">
    <property type="entry name" value="PKS_PP"/>
    <property type="match status" value="4"/>
</dbReference>
<dbReference type="SMART" id="SM01294">
    <property type="entry name" value="PKS_PP_betabranch"/>
    <property type="match status" value="2"/>
</dbReference>
<dbReference type="SUPFAM" id="SSF47336">
    <property type="entry name" value="ACP-like"/>
    <property type="match status" value="5"/>
</dbReference>
<dbReference type="SUPFAM" id="SSF51735">
    <property type="entry name" value="NAD(P)-binding Rossmann-fold domains"/>
    <property type="match status" value="4"/>
</dbReference>
<dbReference type="SUPFAM" id="SSF53335">
    <property type="entry name" value="S-adenosyl-L-methionine-dependent methyltransferases"/>
    <property type="match status" value="1"/>
</dbReference>
<dbReference type="SUPFAM" id="SSF53901">
    <property type="entry name" value="Thiolase-like"/>
    <property type="match status" value="4"/>
</dbReference>
<dbReference type="PROSITE" id="PS50075">
    <property type="entry name" value="CARRIER"/>
    <property type="match status" value="5"/>
</dbReference>
<dbReference type="PROSITE" id="PS00606">
    <property type="entry name" value="KS3_1"/>
    <property type="match status" value="2"/>
</dbReference>
<dbReference type="PROSITE" id="PS52004">
    <property type="entry name" value="KS3_2"/>
    <property type="match status" value="4"/>
</dbReference>
<dbReference type="PROSITE" id="PS52019">
    <property type="entry name" value="PKS_MFAS_DH"/>
    <property type="match status" value="2"/>
</dbReference>